<accession>Q2J3Z9</accession>
<protein>
    <recommendedName>
        <fullName evidence="1">Putative pterin-4-alpha-carbinolamine dehydratase</fullName>
        <shortName evidence="1">PHS</shortName>
        <ecNumber evidence="1">4.2.1.96</ecNumber>
    </recommendedName>
    <alternativeName>
        <fullName evidence="1">4-alpha-hydroxy-tetrahydropterin dehydratase</fullName>
    </alternativeName>
    <alternativeName>
        <fullName evidence="1">Pterin carbinolamine dehydratase</fullName>
        <shortName evidence="1">PCD</shortName>
    </alternativeName>
</protein>
<feature type="chain" id="PRO_1000050443" description="Putative pterin-4-alpha-carbinolamine dehydratase">
    <location>
        <begin position="1"/>
        <end position="101"/>
    </location>
</feature>
<organism>
    <name type="scientific">Rhodopseudomonas palustris (strain HaA2)</name>
    <dbReference type="NCBI Taxonomy" id="316058"/>
    <lineage>
        <taxon>Bacteria</taxon>
        <taxon>Pseudomonadati</taxon>
        <taxon>Pseudomonadota</taxon>
        <taxon>Alphaproteobacteria</taxon>
        <taxon>Hyphomicrobiales</taxon>
        <taxon>Nitrobacteraceae</taxon>
        <taxon>Rhodopseudomonas</taxon>
    </lineage>
</organism>
<reference key="1">
    <citation type="submission" date="2006-01" db="EMBL/GenBank/DDBJ databases">
        <title>Complete sequence of Rhodopseudomonas palustris HaA2.</title>
        <authorList>
            <consortium name="US DOE Joint Genome Institute"/>
            <person name="Copeland A."/>
            <person name="Lucas S."/>
            <person name="Lapidus A."/>
            <person name="Barry K."/>
            <person name="Detter J.C."/>
            <person name="Glavina T."/>
            <person name="Hammon N."/>
            <person name="Israni S."/>
            <person name="Pitluck S."/>
            <person name="Chain P."/>
            <person name="Malfatti S."/>
            <person name="Shin M."/>
            <person name="Vergez L."/>
            <person name="Schmutz J."/>
            <person name="Larimer F."/>
            <person name="Land M."/>
            <person name="Hauser L."/>
            <person name="Pelletier D.A."/>
            <person name="Kyrpides N."/>
            <person name="Anderson I."/>
            <person name="Oda Y."/>
            <person name="Harwood C.S."/>
            <person name="Richardson P."/>
        </authorList>
    </citation>
    <scope>NUCLEOTIDE SEQUENCE [LARGE SCALE GENOMIC DNA]</scope>
    <source>
        <strain>HaA2</strain>
    </source>
</reference>
<dbReference type="EC" id="4.2.1.96" evidence="1"/>
<dbReference type="EMBL" id="CP000250">
    <property type="protein sequence ID" value="ABD04811.1"/>
    <property type="molecule type" value="Genomic_DNA"/>
</dbReference>
<dbReference type="RefSeq" id="WP_011439001.1">
    <property type="nucleotide sequence ID" value="NC_007778.1"/>
</dbReference>
<dbReference type="SMR" id="Q2J3Z9"/>
<dbReference type="STRING" id="316058.RPB_0099"/>
<dbReference type="KEGG" id="rpb:RPB_0099"/>
<dbReference type="eggNOG" id="COG2154">
    <property type="taxonomic scope" value="Bacteria"/>
</dbReference>
<dbReference type="HOGENOM" id="CLU_081974_3_2_5"/>
<dbReference type="OrthoDB" id="9794987at2"/>
<dbReference type="Proteomes" id="UP000008809">
    <property type="component" value="Chromosome"/>
</dbReference>
<dbReference type="GO" id="GO:0008124">
    <property type="term" value="F:4-alpha-hydroxytetrahydrobiopterin dehydratase activity"/>
    <property type="evidence" value="ECO:0007669"/>
    <property type="project" value="UniProtKB-UniRule"/>
</dbReference>
<dbReference type="GO" id="GO:0006729">
    <property type="term" value="P:tetrahydrobiopterin biosynthetic process"/>
    <property type="evidence" value="ECO:0007669"/>
    <property type="project" value="InterPro"/>
</dbReference>
<dbReference type="CDD" id="cd00914">
    <property type="entry name" value="PCD_DCoH_subfamily_b"/>
    <property type="match status" value="1"/>
</dbReference>
<dbReference type="Gene3D" id="3.30.1360.20">
    <property type="entry name" value="Transcriptional coactivator/pterin dehydratase"/>
    <property type="match status" value="1"/>
</dbReference>
<dbReference type="HAMAP" id="MF_00434">
    <property type="entry name" value="Pterin_4_alpha"/>
    <property type="match status" value="1"/>
</dbReference>
<dbReference type="InterPro" id="IPR036428">
    <property type="entry name" value="PCD_sf"/>
</dbReference>
<dbReference type="InterPro" id="IPR001533">
    <property type="entry name" value="Pterin_deHydtase"/>
</dbReference>
<dbReference type="NCBIfam" id="NF002017">
    <property type="entry name" value="PRK00823.1-2"/>
    <property type="match status" value="1"/>
</dbReference>
<dbReference type="NCBIfam" id="NF002018">
    <property type="entry name" value="PRK00823.1-3"/>
    <property type="match status" value="1"/>
</dbReference>
<dbReference type="NCBIfam" id="NF002020">
    <property type="entry name" value="PRK00823.1-5"/>
    <property type="match status" value="1"/>
</dbReference>
<dbReference type="PANTHER" id="PTHR12599">
    <property type="entry name" value="PTERIN-4-ALPHA-CARBINOLAMINE DEHYDRATASE"/>
    <property type="match status" value="1"/>
</dbReference>
<dbReference type="PANTHER" id="PTHR12599:SF0">
    <property type="entry name" value="PTERIN-4-ALPHA-CARBINOLAMINE DEHYDRATASE"/>
    <property type="match status" value="1"/>
</dbReference>
<dbReference type="Pfam" id="PF01329">
    <property type="entry name" value="Pterin_4a"/>
    <property type="match status" value="1"/>
</dbReference>
<dbReference type="SUPFAM" id="SSF55248">
    <property type="entry name" value="PCD-like"/>
    <property type="match status" value="1"/>
</dbReference>
<evidence type="ECO:0000255" key="1">
    <source>
        <dbReference type="HAMAP-Rule" id="MF_00434"/>
    </source>
</evidence>
<keyword id="KW-0456">Lyase</keyword>
<keyword id="KW-1185">Reference proteome</keyword>
<comment type="catalytic activity">
    <reaction evidence="1">
        <text>(4aS,6R)-4a-hydroxy-L-erythro-5,6,7,8-tetrahydrobiopterin = (6R)-L-erythro-6,7-dihydrobiopterin + H2O</text>
        <dbReference type="Rhea" id="RHEA:11920"/>
        <dbReference type="ChEBI" id="CHEBI:15377"/>
        <dbReference type="ChEBI" id="CHEBI:15642"/>
        <dbReference type="ChEBI" id="CHEBI:43120"/>
        <dbReference type="EC" id="4.2.1.96"/>
    </reaction>
</comment>
<comment type="similarity">
    <text evidence="1">Belongs to the pterin-4-alpha-carbinolamine dehydratase family.</text>
</comment>
<name>PHS_RHOP2</name>
<gene>
    <name type="ordered locus">RPB_0099</name>
</gene>
<sequence length="101" mass="11249">MVERLTGRERQQALQSIAGWREVEGRDAIARSFVFTDFNEAFGFMTRVALVAEKADHHPEWRNVYKTVEVVLTTHDAGGVTRRDIDLAAAMNAIAGQFGVA</sequence>
<proteinExistence type="inferred from homology"/>